<name>IF3C_GALSU</name>
<evidence type="ECO:0000255" key="1">
    <source>
        <dbReference type="HAMAP-Rule" id="MF_00080"/>
    </source>
</evidence>
<gene>
    <name evidence="1" type="primary">infC</name>
</gene>
<organism>
    <name type="scientific">Galdieria sulphuraria</name>
    <name type="common">Red alga</name>
    <dbReference type="NCBI Taxonomy" id="130081"/>
    <lineage>
        <taxon>Eukaryota</taxon>
        <taxon>Rhodophyta</taxon>
        <taxon>Bangiophyceae</taxon>
        <taxon>Galdieriales</taxon>
        <taxon>Galdieriaceae</taxon>
        <taxon>Galdieria</taxon>
    </lineage>
</organism>
<geneLocation type="chloroplast"/>
<keyword id="KW-0150">Chloroplast</keyword>
<keyword id="KW-0396">Initiation factor</keyword>
<keyword id="KW-0934">Plastid</keyword>
<keyword id="KW-0648">Protein biosynthesis</keyword>
<accession>Q9MS97</accession>
<sequence length="181" mass="21393">MLEKSKQKNSFDKNKFIINNKISFPIVRIIDENNYQLGIYKIEDALKLAEEKNLDLVLINDKTEPPVVRIIDYGKFKFAQEKKSREAKKKQHQVTVKEIKMRYKIEDHDYQVRINQAIKFLKLGNKVKISLTFKGREIQYIDLAEKLIEKIIHSLSSLAEHEKVFDKEGKNIYIMLLPKKT</sequence>
<dbReference type="EMBL" id="AF233069">
    <property type="protein sequence ID" value="AAF81685.1"/>
    <property type="molecule type" value="Genomic_DNA"/>
</dbReference>
<dbReference type="SMR" id="Q9MS97"/>
<dbReference type="GO" id="GO:0009507">
    <property type="term" value="C:chloroplast"/>
    <property type="evidence" value="ECO:0007669"/>
    <property type="project" value="UniProtKB-SubCell"/>
</dbReference>
<dbReference type="GO" id="GO:0005829">
    <property type="term" value="C:cytosol"/>
    <property type="evidence" value="ECO:0007669"/>
    <property type="project" value="TreeGrafter"/>
</dbReference>
<dbReference type="GO" id="GO:0016020">
    <property type="term" value="C:membrane"/>
    <property type="evidence" value="ECO:0007669"/>
    <property type="project" value="TreeGrafter"/>
</dbReference>
<dbReference type="GO" id="GO:0043022">
    <property type="term" value="F:ribosome binding"/>
    <property type="evidence" value="ECO:0007669"/>
    <property type="project" value="TreeGrafter"/>
</dbReference>
<dbReference type="GO" id="GO:0003743">
    <property type="term" value="F:translation initiation factor activity"/>
    <property type="evidence" value="ECO:0007669"/>
    <property type="project" value="UniProtKB-UniRule"/>
</dbReference>
<dbReference type="GO" id="GO:0032790">
    <property type="term" value="P:ribosome disassembly"/>
    <property type="evidence" value="ECO:0007669"/>
    <property type="project" value="TreeGrafter"/>
</dbReference>
<dbReference type="FunFam" id="3.30.110.10:FF:000001">
    <property type="entry name" value="Translation initiation factor IF-3"/>
    <property type="match status" value="1"/>
</dbReference>
<dbReference type="Gene3D" id="3.30.110.10">
    <property type="entry name" value="Translation initiation factor 3 (IF-3), C-terminal domain"/>
    <property type="match status" value="1"/>
</dbReference>
<dbReference type="Gene3D" id="3.10.20.80">
    <property type="entry name" value="Translation initiation factor 3 (IF-3), N-terminal domain"/>
    <property type="match status" value="1"/>
</dbReference>
<dbReference type="HAMAP" id="MF_00080">
    <property type="entry name" value="IF_3"/>
    <property type="match status" value="1"/>
</dbReference>
<dbReference type="InterPro" id="IPR036788">
    <property type="entry name" value="T_IF-3_C_sf"/>
</dbReference>
<dbReference type="InterPro" id="IPR036787">
    <property type="entry name" value="T_IF-3_N_sf"/>
</dbReference>
<dbReference type="InterPro" id="IPR019813">
    <property type="entry name" value="Translation_initiation_fac3_CS"/>
</dbReference>
<dbReference type="InterPro" id="IPR001288">
    <property type="entry name" value="Translation_initiation_fac_3"/>
</dbReference>
<dbReference type="InterPro" id="IPR019815">
    <property type="entry name" value="Translation_initiation_fac_3_C"/>
</dbReference>
<dbReference type="InterPro" id="IPR019814">
    <property type="entry name" value="Translation_initiation_fac_3_N"/>
</dbReference>
<dbReference type="NCBIfam" id="TIGR00168">
    <property type="entry name" value="infC"/>
    <property type="match status" value="1"/>
</dbReference>
<dbReference type="PANTHER" id="PTHR10938">
    <property type="entry name" value="TRANSLATION INITIATION FACTOR IF-3"/>
    <property type="match status" value="1"/>
</dbReference>
<dbReference type="PANTHER" id="PTHR10938:SF0">
    <property type="entry name" value="TRANSLATION INITIATION FACTOR IF-3, MITOCHONDRIAL"/>
    <property type="match status" value="1"/>
</dbReference>
<dbReference type="Pfam" id="PF00707">
    <property type="entry name" value="IF3_C"/>
    <property type="match status" value="1"/>
</dbReference>
<dbReference type="Pfam" id="PF05198">
    <property type="entry name" value="IF3_N"/>
    <property type="match status" value="1"/>
</dbReference>
<dbReference type="SUPFAM" id="SSF55200">
    <property type="entry name" value="Translation initiation factor IF3, C-terminal domain"/>
    <property type="match status" value="1"/>
</dbReference>
<dbReference type="SUPFAM" id="SSF54364">
    <property type="entry name" value="Translation initiation factor IF3, N-terminal domain"/>
    <property type="match status" value="1"/>
</dbReference>
<dbReference type="PROSITE" id="PS00938">
    <property type="entry name" value="IF3"/>
    <property type="match status" value="1"/>
</dbReference>
<comment type="function">
    <text evidence="1">IF-3 binds to the 30S ribosomal subunit and shifts the equilibrium between 70S ribosomes and their 50S and 30S subunits in favor of the free subunits, thus enhancing the availability of 30S subunits on which protein synthesis initiation begins.</text>
</comment>
<comment type="subunit">
    <text evidence="1">Monomer.</text>
</comment>
<comment type="subcellular location">
    <subcellularLocation>
        <location>Plastid</location>
        <location>Chloroplast</location>
    </subcellularLocation>
</comment>
<comment type="similarity">
    <text evidence="1">Belongs to the IF-3 family.</text>
</comment>
<proteinExistence type="inferred from homology"/>
<reference key="1">
    <citation type="submission" date="2000-02" db="EMBL/GenBank/DDBJ databases">
        <authorList>
            <person name="Whitney S.M."/>
            <person name="Andrews J."/>
        </authorList>
    </citation>
    <scope>NUCLEOTIDE SEQUENCE [GENOMIC DNA]</scope>
    <source>
        <strain>UTEX 2393</strain>
    </source>
</reference>
<protein>
    <recommendedName>
        <fullName evidence="1">Translation initiation factor IF-3, chloroplastic</fullName>
    </recommendedName>
</protein>
<feature type="chain" id="PRO_0000177616" description="Translation initiation factor IF-3, chloroplastic">
    <location>
        <begin position="1"/>
        <end position="181"/>
    </location>
</feature>